<name>IF1_BRUA2</name>
<comment type="function">
    <text evidence="1">One of the essential components for the initiation of protein synthesis. Stabilizes the binding of IF-2 and IF-3 on the 30S subunit to which N-formylmethionyl-tRNA(fMet) subsequently binds. Helps modulate mRNA selection, yielding the 30S pre-initiation complex (PIC). Upon addition of the 50S ribosomal subunit IF-1, IF-2 and IF-3 are released leaving the mature 70S translation initiation complex.</text>
</comment>
<comment type="subunit">
    <text evidence="1">Component of the 30S ribosomal translation pre-initiation complex which assembles on the 30S ribosome in the order IF-2 and IF-3, IF-1 and N-formylmethionyl-tRNA(fMet); mRNA recruitment can occur at any time during PIC assembly.</text>
</comment>
<comment type="subcellular location">
    <subcellularLocation>
        <location evidence="1">Cytoplasm</location>
    </subcellularLocation>
</comment>
<comment type="similarity">
    <text evidence="1">Belongs to the IF-1 family.</text>
</comment>
<evidence type="ECO:0000255" key="1">
    <source>
        <dbReference type="HAMAP-Rule" id="MF_00075"/>
    </source>
</evidence>
<keyword id="KW-0963">Cytoplasm</keyword>
<keyword id="KW-0396">Initiation factor</keyword>
<keyword id="KW-0648">Protein biosynthesis</keyword>
<keyword id="KW-1185">Reference proteome</keyword>
<keyword id="KW-0694">RNA-binding</keyword>
<keyword id="KW-0699">rRNA-binding</keyword>
<proteinExistence type="evidence at transcript level"/>
<feature type="chain" id="PRO_0000095753" description="Translation initiation factor IF-1">
    <location>
        <begin position="1"/>
        <end position="72"/>
    </location>
</feature>
<feature type="domain" description="S1-like" evidence="1">
    <location>
        <begin position="1"/>
        <end position="72"/>
    </location>
</feature>
<organism>
    <name type="scientific">Brucella abortus (strain 2308)</name>
    <dbReference type="NCBI Taxonomy" id="359391"/>
    <lineage>
        <taxon>Bacteria</taxon>
        <taxon>Pseudomonadati</taxon>
        <taxon>Pseudomonadota</taxon>
        <taxon>Alphaproteobacteria</taxon>
        <taxon>Hyphomicrobiales</taxon>
        <taxon>Brucellaceae</taxon>
        <taxon>Brucella/Ochrobactrum group</taxon>
        <taxon>Brucella</taxon>
    </lineage>
</organism>
<protein>
    <recommendedName>
        <fullName evidence="1">Translation initiation factor IF-1</fullName>
    </recommendedName>
</protein>
<sequence>MAKEEVLEFPGVVTELLPNAMFRVKLENEHEIIAHTAGRMRKNRIRVLAGDKVLVEMTPYDLTKGRITYRFK</sequence>
<accession>Q2YPC1</accession>
<accession>P62922</accession>
<accession>Q57FA2</accession>
<accession>Q8YF56</accession>
<accession>Q9ACA6</accession>
<dbReference type="EMBL" id="AF288531">
    <property type="protein sequence ID" value="AAK11548.1"/>
    <property type="molecule type" value="Genomic_DNA"/>
</dbReference>
<dbReference type="EMBL" id="AM040264">
    <property type="protein sequence ID" value="CAJ10238.1"/>
    <property type="molecule type" value="Genomic_DNA"/>
</dbReference>
<dbReference type="RefSeq" id="WP_002965531.1">
    <property type="nucleotide sequence ID" value="NZ_KN046823.1"/>
</dbReference>
<dbReference type="SMR" id="Q2YPC1"/>
<dbReference type="STRING" id="359391.BAB1_0282"/>
<dbReference type="GeneID" id="97534350"/>
<dbReference type="KEGG" id="bmf:BAB1_0282"/>
<dbReference type="PATRIC" id="fig|359391.11.peg.1701"/>
<dbReference type="HOGENOM" id="CLU_151267_1_0_5"/>
<dbReference type="Proteomes" id="UP000002719">
    <property type="component" value="Chromosome I"/>
</dbReference>
<dbReference type="GO" id="GO:0005829">
    <property type="term" value="C:cytosol"/>
    <property type="evidence" value="ECO:0007669"/>
    <property type="project" value="TreeGrafter"/>
</dbReference>
<dbReference type="GO" id="GO:0043022">
    <property type="term" value="F:ribosome binding"/>
    <property type="evidence" value="ECO:0007669"/>
    <property type="project" value="UniProtKB-UniRule"/>
</dbReference>
<dbReference type="GO" id="GO:0019843">
    <property type="term" value="F:rRNA binding"/>
    <property type="evidence" value="ECO:0007669"/>
    <property type="project" value="UniProtKB-UniRule"/>
</dbReference>
<dbReference type="GO" id="GO:0003743">
    <property type="term" value="F:translation initiation factor activity"/>
    <property type="evidence" value="ECO:0007669"/>
    <property type="project" value="UniProtKB-UniRule"/>
</dbReference>
<dbReference type="CDD" id="cd04451">
    <property type="entry name" value="S1_IF1"/>
    <property type="match status" value="1"/>
</dbReference>
<dbReference type="FunFam" id="2.40.50.140:FF:000002">
    <property type="entry name" value="Translation initiation factor IF-1"/>
    <property type="match status" value="1"/>
</dbReference>
<dbReference type="Gene3D" id="2.40.50.140">
    <property type="entry name" value="Nucleic acid-binding proteins"/>
    <property type="match status" value="1"/>
</dbReference>
<dbReference type="HAMAP" id="MF_00075">
    <property type="entry name" value="IF_1"/>
    <property type="match status" value="1"/>
</dbReference>
<dbReference type="InterPro" id="IPR012340">
    <property type="entry name" value="NA-bd_OB-fold"/>
</dbReference>
<dbReference type="InterPro" id="IPR006196">
    <property type="entry name" value="RNA-binding_domain_S1_IF1"/>
</dbReference>
<dbReference type="InterPro" id="IPR003029">
    <property type="entry name" value="S1_domain"/>
</dbReference>
<dbReference type="InterPro" id="IPR004368">
    <property type="entry name" value="TIF_IF1"/>
</dbReference>
<dbReference type="NCBIfam" id="TIGR00008">
    <property type="entry name" value="infA"/>
    <property type="match status" value="1"/>
</dbReference>
<dbReference type="PANTHER" id="PTHR33370">
    <property type="entry name" value="TRANSLATION INITIATION FACTOR IF-1, CHLOROPLASTIC"/>
    <property type="match status" value="1"/>
</dbReference>
<dbReference type="PANTHER" id="PTHR33370:SF1">
    <property type="entry name" value="TRANSLATION INITIATION FACTOR IF-1, CHLOROPLASTIC"/>
    <property type="match status" value="1"/>
</dbReference>
<dbReference type="Pfam" id="PF01176">
    <property type="entry name" value="eIF-1a"/>
    <property type="match status" value="1"/>
</dbReference>
<dbReference type="SMART" id="SM00316">
    <property type="entry name" value="S1"/>
    <property type="match status" value="1"/>
</dbReference>
<dbReference type="SUPFAM" id="SSF50249">
    <property type="entry name" value="Nucleic acid-binding proteins"/>
    <property type="match status" value="1"/>
</dbReference>
<dbReference type="PROSITE" id="PS50832">
    <property type="entry name" value="S1_IF1_TYPE"/>
    <property type="match status" value="1"/>
</dbReference>
<gene>
    <name evidence="1" type="primary">infA</name>
    <name type="ordered locus">BAB1_0282</name>
</gene>
<reference key="1">
    <citation type="journal article" date="2001" name="Infect. Immun.">
        <title>Brucella abortus genes identified following constitutive growth and macrophage infection.</title>
        <authorList>
            <person name="Eskra L."/>
            <person name="Canavessi A."/>
            <person name="Carey M."/>
            <person name="Splitter G.A."/>
        </authorList>
    </citation>
    <scope>NUCLEOTIDE SEQUENCE [GENOMIC DNA]</scope>
    <scope>INDUCTION</scope>
</reference>
<reference key="2">
    <citation type="journal article" date="2005" name="Infect. Immun.">
        <title>Whole-genome analyses of speciation events in pathogenic Brucellae.</title>
        <authorList>
            <person name="Chain P.S."/>
            <person name="Comerci D.J."/>
            <person name="Tolmasky M.E."/>
            <person name="Larimer F.W."/>
            <person name="Malfatti S.A."/>
            <person name="Vergez L.M."/>
            <person name="Aguero F."/>
            <person name="Land M.L."/>
            <person name="Ugalde R.A."/>
            <person name="Garcia E."/>
        </authorList>
    </citation>
    <scope>NUCLEOTIDE SEQUENCE [LARGE SCALE GENOMIC DNA]</scope>
    <source>
        <strain>2308</strain>
    </source>
</reference>